<comment type="function">
    <text evidence="1">Catalyzes the formation of acetyl phosphate from acetate and ATP. Can also catalyze the reverse reaction.</text>
</comment>
<comment type="catalytic activity">
    <reaction evidence="1">
        <text>acetate + ATP = acetyl phosphate + ADP</text>
        <dbReference type="Rhea" id="RHEA:11352"/>
        <dbReference type="ChEBI" id="CHEBI:22191"/>
        <dbReference type="ChEBI" id="CHEBI:30089"/>
        <dbReference type="ChEBI" id="CHEBI:30616"/>
        <dbReference type="ChEBI" id="CHEBI:456216"/>
        <dbReference type="EC" id="2.7.2.1"/>
    </reaction>
</comment>
<comment type="cofactor">
    <cofactor evidence="1">
        <name>Mg(2+)</name>
        <dbReference type="ChEBI" id="CHEBI:18420"/>
    </cofactor>
    <cofactor evidence="1">
        <name>Mn(2+)</name>
        <dbReference type="ChEBI" id="CHEBI:29035"/>
    </cofactor>
    <text evidence="1">Mg(2+). Can also accept Mn(2+).</text>
</comment>
<comment type="pathway">
    <text evidence="1">Metabolic intermediate biosynthesis; acetyl-CoA biosynthesis; acetyl-CoA from acetate: step 1/2.</text>
</comment>
<comment type="subunit">
    <text evidence="1">Homodimer.</text>
</comment>
<comment type="subcellular location">
    <subcellularLocation>
        <location evidence="1">Cytoplasm</location>
    </subcellularLocation>
</comment>
<comment type="similarity">
    <text evidence="1">Belongs to the acetokinase family.</text>
</comment>
<reference key="1">
    <citation type="journal article" date="2004" name="J. Bacteriol.">
        <title>Complete genome sequence of Rickettsia typhi and comparison with sequences of other Rickettsiae.</title>
        <authorList>
            <person name="McLeod M.P."/>
            <person name="Qin X."/>
            <person name="Karpathy S.E."/>
            <person name="Gioia J."/>
            <person name="Highlander S.K."/>
            <person name="Fox G.E."/>
            <person name="McNeill T.Z."/>
            <person name="Jiang H."/>
            <person name="Muzny D."/>
            <person name="Jacob L.S."/>
            <person name="Hawes A.C."/>
            <person name="Sodergren E."/>
            <person name="Gill R."/>
            <person name="Hume J."/>
            <person name="Morgan M."/>
            <person name="Fan G."/>
            <person name="Amin A.G."/>
            <person name="Gibbs R.A."/>
            <person name="Hong C."/>
            <person name="Yu X.-J."/>
            <person name="Walker D.H."/>
            <person name="Weinstock G.M."/>
        </authorList>
    </citation>
    <scope>NUCLEOTIDE SEQUENCE [LARGE SCALE GENOMIC DNA]</scope>
    <source>
        <strain>ATCC VR-144 / Wilmington</strain>
    </source>
</reference>
<name>ACKA_RICTY</name>
<accession>Q68XX8</accession>
<sequence>MKDVILIANAGSSSLKISIFGIQNKKVKDKIYNIFLEKNNNKILFYINQKQESAISIKDNAIEMMINLFEEWWTKQSALNLIATGHRIVHGGKNFNKPVIVNEKIIKELRVLIPLSPLHQPYNLQVLDLFFQKYKDISHIICFDTSFHYTNPPITKAFGLPKQYYDKGIMRYGFHGLSYQYVSSHFKEITMEDLPTKTIIAHLGSGSSLCAIKNGLSLTSSMGFSVLDGVMMATRTGNLDPGVVLYLINHEKMTMKEITELLYKKSGLLGISGESSDMRTLITNNSHDSKFAVELFVYRIVLEIGKLIAALEGIDCIIFTAGIGQNSAVIREMISGKLSWLGIKIDYGKNQKNEHRISTKGSKVKVFVVPTNEELIIAEEVMKFL</sequence>
<gene>
    <name evidence="1" type="primary">ackA</name>
    <name type="ordered locus">RT0026</name>
</gene>
<organism>
    <name type="scientific">Rickettsia typhi (strain ATCC VR-144 / Wilmington)</name>
    <dbReference type="NCBI Taxonomy" id="257363"/>
    <lineage>
        <taxon>Bacteria</taxon>
        <taxon>Pseudomonadati</taxon>
        <taxon>Pseudomonadota</taxon>
        <taxon>Alphaproteobacteria</taxon>
        <taxon>Rickettsiales</taxon>
        <taxon>Rickettsiaceae</taxon>
        <taxon>Rickettsieae</taxon>
        <taxon>Rickettsia</taxon>
        <taxon>typhus group</taxon>
    </lineage>
</organism>
<protein>
    <recommendedName>
        <fullName evidence="1">Acetate kinase</fullName>
        <ecNumber evidence="1">2.7.2.1</ecNumber>
    </recommendedName>
    <alternativeName>
        <fullName evidence="1">Acetokinase</fullName>
    </alternativeName>
</protein>
<proteinExistence type="inferred from homology"/>
<dbReference type="EC" id="2.7.2.1" evidence="1"/>
<dbReference type="EMBL" id="AE017197">
    <property type="protein sequence ID" value="AAU03514.1"/>
    <property type="molecule type" value="Genomic_DNA"/>
</dbReference>
<dbReference type="RefSeq" id="WP_011190501.1">
    <property type="nucleotide sequence ID" value="NC_006142.1"/>
</dbReference>
<dbReference type="SMR" id="Q68XX8"/>
<dbReference type="KEGG" id="rty:RT0026"/>
<dbReference type="eggNOG" id="COG0282">
    <property type="taxonomic scope" value="Bacteria"/>
</dbReference>
<dbReference type="HOGENOM" id="CLU_020352_0_0_5"/>
<dbReference type="OrthoDB" id="9802453at2"/>
<dbReference type="UniPathway" id="UPA00340">
    <property type="reaction ID" value="UER00458"/>
</dbReference>
<dbReference type="Proteomes" id="UP000000604">
    <property type="component" value="Chromosome"/>
</dbReference>
<dbReference type="GO" id="GO:0005737">
    <property type="term" value="C:cytoplasm"/>
    <property type="evidence" value="ECO:0007669"/>
    <property type="project" value="UniProtKB-SubCell"/>
</dbReference>
<dbReference type="GO" id="GO:0008776">
    <property type="term" value="F:acetate kinase activity"/>
    <property type="evidence" value="ECO:0007669"/>
    <property type="project" value="UniProtKB-UniRule"/>
</dbReference>
<dbReference type="GO" id="GO:0005524">
    <property type="term" value="F:ATP binding"/>
    <property type="evidence" value="ECO:0007669"/>
    <property type="project" value="UniProtKB-KW"/>
</dbReference>
<dbReference type="GO" id="GO:0000287">
    <property type="term" value="F:magnesium ion binding"/>
    <property type="evidence" value="ECO:0007669"/>
    <property type="project" value="UniProtKB-UniRule"/>
</dbReference>
<dbReference type="GO" id="GO:0006083">
    <property type="term" value="P:acetate metabolic process"/>
    <property type="evidence" value="ECO:0007669"/>
    <property type="project" value="TreeGrafter"/>
</dbReference>
<dbReference type="GO" id="GO:0006085">
    <property type="term" value="P:acetyl-CoA biosynthetic process"/>
    <property type="evidence" value="ECO:0007669"/>
    <property type="project" value="UniProtKB-UniRule"/>
</dbReference>
<dbReference type="Gene3D" id="3.30.420.40">
    <property type="match status" value="2"/>
</dbReference>
<dbReference type="HAMAP" id="MF_00020">
    <property type="entry name" value="Acetate_kinase"/>
    <property type="match status" value="1"/>
</dbReference>
<dbReference type="InterPro" id="IPR004372">
    <property type="entry name" value="Ac/propionate_kinase"/>
</dbReference>
<dbReference type="InterPro" id="IPR000890">
    <property type="entry name" value="Aliphatic_acid_kin_short-chain"/>
</dbReference>
<dbReference type="InterPro" id="IPR023865">
    <property type="entry name" value="Aliphatic_acid_kinase_CS"/>
</dbReference>
<dbReference type="InterPro" id="IPR043129">
    <property type="entry name" value="ATPase_NBD"/>
</dbReference>
<dbReference type="NCBIfam" id="TIGR00016">
    <property type="entry name" value="ackA"/>
    <property type="match status" value="1"/>
</dbReference>
<dbReference type="PANTHER" id="PTHR21060">
    <property type="entry name" value="ACETATE KINASE"/>
    <property type="match status" value="1"/>
</dbReference>
<dbReference type="PANTHER" id="PTHR21060:SF15">
    <property type="entry name" value="ACETATE KINASE-RELATED"/>
    <property type="match status" value="1"/>
</dbReference>
<dbReference type="Pfam" id="PF00871">
    <property type="entry name" value="Acetate_kinase"/>
    <property type="match status" value="1"/>
</dbReference>
<dbReference type="PIRSF" id="PIRSF000722">
    <property type="entry name" value="Acetate_prop_kin"/>
    <property type="match status" value="1"/>
</dbReference>
<dbReference type="PRINTS" id="PR00471">
    <property type="entry name" value="ACETATEKNASE"/>
</dbReference>
<dbReference type="SUPFAM" id="SSF53067">
    <property type="entry name" value="Actin-like ATPase domain"/>
    <property type="match status" value="2"/>
</dbReference>
<dbReference type="PROSITE" id="PS01075">
    <property type="entry name" value="ACETATE_KINASE_1"/>
    <property type="match status" value="1"/>
</dbReference>
<dbReference type="PROSITE" id="PS01076">
    <property type="entry name" value="ACETATE_KINASE_2"/>
    <property type="match status" value="1"/>
</dbReference>
<keyword id="KW-0067">ATP-binding</keyword>
<keyword id="KW-0963">Cytoplasm</keyword>
<keyword id="KW-0418">Kinase</keyword>
<keyword id="KW-0460">Magnesium</keyword>
<keyword id="KW-0479">Metal-binding</keyword>
<keyword id="KW-0547">Nucleotide-binding</keyword>
<keyword id="KW-0808">Transferase</keyword>
<feature type="chain" id="PRO_0000107606" description="Acetate kinase">
    <location>
        <begin position="1"/>
        <end position="385"/>
    </location>
</feature>
<feature type="active site" description="Proton donor/acceptor" evidence="1">
    <location>
        <position position="144"/>
    </location>
</feature>
<feature type="binding site" evidence="1">
    <location>
        <position position="9"/>
    </location>
    <ligand>
        <name>Mg(2+)</name>
        <dbReference type="ChEBI" id="CHEBI:18420"/>
    </ligand>
</feature>
<feature type="binding site" evidence="1">
    <location>
        <position position="16"/>
    </location>
    <ligand>
        <name>ATP</name>
        <dbReference type="ChEBI" id="CHEBI:30616"/>
    </ligand>
</feature>
<feature type="binding site" evidence="1">
    <location>
        <position position="87"/>
    </location>
    <ligand>
        <name>substrate</name>
    </ligand>
</feature>
<feature type="binding site" evidence="1">
    <location>
        <begin position="202"/>
        <end position="206"/>
    </location>
    <ligand>
        <name>ATP</name>
        <dbReference type="ChEBI" id="CHEBI:30616"/>
    </ligand>
</feature>
<feature type="binding site" evidence="1">
    <location>
        <begin position="277"/>
        <end position="279"/>
    </location>
    <ligand>
        <name>ATP</name>
        <dbReference type="ChEBI" id="CHEBI:30616"/>
    </ligand>
</feature>
<feature type="binding site" evidence="1">
    <location>
        <position position="373"/>
    </location>
    <ligand>
        <name>Mg(2+)</name>
        <dbReference type="ChEBI" id="CHEBI:18420"/>
    </ligand>
</feature>
<feature type="site" description="Transition state stabilizer" evidence="1">
    <location>
        <position position="175"/>
    </location>
</feature>
<feature type="site" description="Transition state stabilizer" evidence="1">
    <location>
        <position position="235"/>
    </location>
</feature>
<evidence type="ECO:0000255" key="1">
    <source>
        <dbReference type="HAMAP-Rule" id="MF_00020"/>
    </source>
</evidence>